<evidence type="ECO:0000255" key="1"/>
<evidence type="ECO:0000255" key="2">
    <source>
        <dbReference type="PROSITE-ProRule" id="PRU00040"/>
    </source>
</evidence>
<evidence type="ECO:0000269" key="3">
    <source>
    </source>
</evidence>
<evidence type="ECO:0000269" key="4">
    <source>
    </source>
</evidence>
<evidence type="ECO:0000269" key="5">
    <source>
    </source>
</evidence>
<evidence type="ECO:0000269" key="6">
    <source>
    </source>
</evidence>
<evidence type="ECO:0000269" key="7">
    <source>
    </source>
</evidence>
<evidence type="ECO:0000269" key="8">
    <source>
    </source>
</evidence>
<evidence type="ECO:0000269" key="9">
    <source>
    </source>
</evidence>
<evidence type="ECO:0000269" key="10">
    <source>
    </source>
</evidence>
<evidence type="ECO:0000303" key="11">
    <source>
    </source>
</evidence>
<evidence type="ECO:0000303" key="12">
    <source>
    </source>
</evidence>
<evidence type="ECO:0000303" key="13">
    <source>
    </source>
</evidence>
<evidence type="ECO:0000303" key="14">
    <source>
    </source>
</evidence>
<evidence type="ECO:0000303" key="15">
    <source>
    </source>
</evidence>
<evidence type="ECO:0000303" key="16">
    <source>
    </source>
</evidence>
<evidence type="ECO:0000305" key="17"/>
<evidence type="ECO:0007744" key="18">
    <source>
        <dbReference type="PDB" id="6PY1"/>
    </source>
</evidence>
<evidence type="ECO:0007744" key="19">
    <source>
        <dbReference type="PDB" id="6W12"/>
    </source>
</evidence>
<evidence type="ECO:0007829" key="20">
    <source>
        <dbReference type="PDB" id="6PUV"/>
    </source>
</evidence>
<evidence type="ECO:0007829" key="21">
    <source>
        <dbReference type="PDB" id="6PY1"/>
    </source>
</evidence>
<feature type="chain" id="PRO_0000046639" description="C-type lectin domain family 10 member A">
    <location>
        <begin position="1"/>
        <end position="316"/>
    </location>
</feature>
<feature type="topological domain" description="Cytoplasmic" evidence="1">
    <location>
        <begin position="1"/>
        <end position="39"/>
    </location>
</feature>
<feature type="transmembrane region" description="Helical; Signal-anchor for type II membrane protein" evidence="1">
    <location>
        <begin position="40"/>
        <end position="60"/>
    </location>
</feature>
<feature type="topological domain" description="Extracellular" evidence="1">
    <location>
        <begin position="61"/>
        <end position="316"/>
    </location>
</feature>
<feature type="domain" description="C-type lectin" evidence="2">
    <location>
        <begin position="188"/>
        <end position="305"/>
    </location>
</feature>
<feature type="coiled-coil region" evidence="1">
    <location>
        <begin position="85"/>
        <end position="176"/>
    </location>
</feature>
<feature type="short sequence motif" description="Endocytosis signal" evidence="5">
    <location>
        <begin position="5"/>
        <end position="8"/>
    </location>
</feature>
<feature type="binding site" evidence="9 18 19">
    <location>
        <position position="218"/>
    </location>
    <ligand>
        <name>Ca(2+)</name>
        <dbReference type="ChEBI" id="CHEBI:29108"/>
        <label>2</label>
    </ligand>
</feature>
<feature type="binding site" evidence="9 18 19">
    <location>
        <position position="220"/>
    </location>
    <ligand>
        <name>Ca(2+)</name>
        <dbReference type="ChEBI" id="CHEBI:29108"/>
        <label>2</label>
    </ligand>
</feature>
<feature type="binding site" evidence="9 18 19">
    <location>
        <position position="224"/>
    </location>
    <ligand>
        <name>Ca(2+)</name>
        <dbReference type="ChEBI" id="CHEBI:29108"/>
        <label>2</label>
    </ligand>
</feature>
<feature type="binding site" evidence="9 18 19">
    <location>
        <position position="243"/>
    </location>
    <ligand>
        <name>Ca(2+)</name>
        <dbReference type="ChEBI" id="CHEBI:29108"/>
        <label>3</label>
    </ligand>
</feature>
<feature type="binding site" evidence="9 18 19">
    <location>
        <position position="267"/>
    </location>
    <ligand>
        <name>a glycoprotein</name>
        <dbReference type="ChEBI" id="CHEBI:17089"/>
    </ligand>
    <ligandPart>
        <name>a 3-O-[N-acetyl-alpha-D-galactosaminyl]-L-serine residue</name>
        <dbReference type="ChEBI" id="CHEBI:53604"/>
    </ligandPart>
</feature>
<feature type="binding site" evidence="18 19">
    <location>
        <position position="269"/>
    </location>
    <ligand>
        <name>a glycoprotein</name>
        <dbReference type="ChEBI" id="CHEBI:17089"/>
    </ligand>
    <ligandPart>
        <name>a 3-O-[N-acetyl-alpha-D-galactosaminyl]-L-serine residue</name>
        <dbReference type="ChEBI" id="CHEBI:53604"/>
    </ligandPart>
</feature>
<feature type="binding site" evidence="9 18 19">
    <location>
        <position position="269"/>
    </location>
    <ligand>
        <name>Ca(2+)</name>
        <dbReference type="ChEBI" id="CHEBI:29108"/>
        <label>1</label>
    </ligand>
</feature>
<feature type="binding site" evidence="9 18 19">
    <location>
        <position position="270"/>
    </location>
    <ligand>
        <name>Ca(2+)</name>
        <dbReference type="ChEBI" id="CHEBI:29108"/>
        <label>3</label>
    </ligand>
</feature>
<feature type="binding site" evidence="18 19">
    <location>
        <position position="280"/>
    </location>
    <ligand>
        <name>a glycoprotein</name>
        <dbReference type="ChEBI" id="CHEBI:17089"/>
    </ligand>
    <ligandPart>
        <name>a 3-O-[N-acetyl-alpha-D-galactosaminyl]-L-serine residue</name>
        <dbReference type="ChEBI" id="CHEBI:53604"/>
    </ligandPart>
</feature>
<feature type="binding site" evidence="9 18 19">
    <location>
        <position position="280"/>
    </location>
    <ligand>
        <name>Ca(2+)</name>
        <dbReference type="ChEBI" id="CHEBI:29108"/>
        <label>1</label>
    </ligand>
</feature>
<feature type="binding site" evidence="9 18 19">
    <location>
        <position position="280"/>
    </location>
    <ligand>
        <name>Ca(2+)</name>
        <dbReference type="ChEBI" id="CHEBI:29108"/>
        <label>3</label>
    </ligand>
</feature>
<feature type="binding site" evidence="9 18 19">
    <location>
        <position position="281"/>
    </location>
    <ligand>
        <name>Ca(2+)</name>
        <dbReference type="ChEBI" id="CHEBI:29108"/>
        <label>3</label>
    </ligand>
</feature>
<feature type="binding site" evidence="18 19">
    <location>
        <position position="286"/>
    </location>
    <ligand>
        <name>a glycoprotein</name>
        <dbReference type="ChEBI" id="CHEBI:17089"/>
    </ligand>
    <ligandPart>
        <name>a 3-O-[N-acetyl-alpha-D-galactosaminyl]-L-serine residue</name>
        <dbReference type="ChEBI" id="CHEBI:53604"/>
    </ligandPart>
</feature>
<feature type="binding site" evidence="18 19">
    <location>
        <position position="292"/>
    </location>
    <ligand>
        <name>a glycoprotein</name>
        <dbReference type="ChEBI" id="CHEBI:17089"/>
    </ligand>
    <ligandPart>
        <name>a 3-O-[N-acetyl-alpha-D-galactosaminyl]-L-serine residue</name>
        <dbReference type="ChEBI" id="CHEBI:53604"/>
    </ligandPart>
</feature>
<feature type="binding site" evidence="9 18 19">
    <location>
        <position position="292"/>
    </location>
    <ligand>
        <name>Ca(2+)</name>
        <dbReference type="ChEBI" id="CHEBI:29108"/>
        <label>1</label>
    </ligand>
</feature>
<feature type="binding site" evidence="9 18 19">
    <location>
        <position position="293"/>
    </location>
    <ligand>
        <name>Ca(2+)</name>
        <dbReference type="ChEBI" id="CHEBI:29108"/>
        <label>1</label>
    </ligand>
</feature>
<feature type="binding site" evidence="9 18 19">
    <location>
        <position position="305"/>
    </location>
    <ligand>
        <name>Ca(2+)</name>
        <dbReference type="ChEBI" id="CHEBI:29108"/>
        <label>2</label>
    </ligand>
</feature>
<feature type="glycosylation site" description="N-linked (GlcNAc...) asparagine" evidence="1">
    <location>
        <position position="78"/>
    </location>
</feature>
<feature type="glycosylation site" description="N-linked (GlcNAc...) asparagine" evidence="1">
    <location>
        <position position="173"/>
    </location>
</feature>
<feature type="disulfide bond" evidence="2">
    <location>
        <begin position="181"/>
        <end position="192"/>
    </location>
</feature>
<feature type="disulfide bond" evidence="2">
    <location>
        <begin position="209"/>
        <end position="304"/>
    </location>
</feature>
<feature type="disulfide bond" evidence="2">
    <location>
        <begin position="282"/>
        <end position="296"/>
    </location>
</feature>
<feature type="splice variant" id="VSP_012848" description="In isoform 2 and isoform 3." evidence="11 12 16">
    <location>
        <begin position="118"/>
        <end position="144"/>
    </location>
</feature>
<feature type="splice variant" id="VSP_012849" description="In isoform 2." evidence="16">
    <original>N</original>
    <variation>NGEE</variation>
    <location>
        <position position="173"/>
    </location>
</feature>
<feature type="splice variant" id="VSP_012850" description="In isoform 3." evidence="11 12">
    <original>NFVQKYLGSAYTWMGLSDPEGAWKWVDGTDYATGFQNWKPGQPDDWQGHGLGGGEDCA</original>
    <variation>VRASGTQFLRHVPFREMVLKLGRTLESSGSFQNDCHLCHTLRDLIGLSIQRNISKLLS</variation>
    <location>
        <begin position="226"/>
        <end position="283"/>
    </location>
</feature>
<feature type="splice variant" id="VSP_012851" description="In isoform 3." evidence="11 12">
    <location>
        <begin position="284"/>
        <end position="316"/>
    </location>
</feature>
<feature type="sequence variant" id="VAR_021262" description="In dbSNP:rs90951." evidence="10">
    <original>C</original>
    <variation>R</variation>
    <location>
        <position position="35"/>
    </location>
</feature>
<feature type="sequence variant" id="VAR_050113" description="In dbSNP:rs16956478.">
    <original>R</original>
    <variation>K</variation>
    <location>
        <position position="73"/>
    </location>
</feature>
<feature type="sequence variant" id="VAR_050114" description="In dbSNP:rs35318160.">
    <original>T</original>
    <variation>M</variation>
    <location>
        <position position="100"/>
    </location>
</feature>
<feature type="sequence variant" id="VAR_050115" description="In dbSNP:rs35101468.">
    <original>A</original>
    <variation>G</variation>
    <location>
        <position position="203"/>
    </location>
</feature>
<feature type="mutagenesis site" description="Loss of receptor-mediated endocytosis." evidence="5">
    <original>Y</original>
    <variation>A</variation>
    <location>
        <position position="5"/>
    </location>
</feature>
<feature type="mutagenesis site" description="45% reduction of receptor-mediated endocytosis; when associated with A-31." evidence="5">
    <original>L</original>
    <variation>A</variation>
    <location>
        <position position="30"/>
    </location>
</feature>
<feature type="mutagenesis site" description="45% reduction of receptor-mediated endocytosis; when associated with A-30." evidence="5">
    <original>L</original>
    <variation>A</variation>
    <location>
        <position position="31"/>
    </location>
</feature>
<feature type="sequence conflict" description="In Ref. 3; AAH27858." evidence="17" ref="3">
    <original>K</original>
    <variation>R</variation>
    <location>
        <position position="112"/>
    </location>
</feature>
<feature type="strand" evidence="20">
    <location>
        <begin position="186"/>
        <end position="188"/>
    </location>
</feature>
<feature type="strand" evidence="20">
    <location>
        <begin position="191"/>
        <end position="195"/>
    </location>
</feature>
<feature type="helix" evidence="20">
    <location>
        <begin position="202"/>
        <end position="211"/>
    </location>
</feature>
<feature type="helix" evidence="20">
    <location>
        <begin position="222"/>
        <end position="229"/>
    </location>
</feature>
<feature type="strand" evidence="20">
    <location>
        <begin position="237"/>
        <end position="242"/>
    </location>
</feature>
<feature type="strand" evidence="21">
    <location>
        <begin position="276"/>
        <end position="278"/>
    </location>
</feature>
<feature type="strand" evidence="20">
    <location>
        <begin position="281"/>
        <end position="285"/>
    </location>
</feature>
<feature type="strand" evidence="20">
    <location>
        <begin position="291"/>
        <end position="295"/>
    </location>
</feature>
<feature type="strand" evidence="20">
    <location>
        <begin position="300"/>
        <end position="307"/>
    </location>
</feature>
<gene>
    <name evidence="15" type="primary">CLEC10A</name>
    <name type="synonym">CLECSF13</name>
    <name type="synonym">CLECSF14</name>
    <name type="synonym">HML</name>
</gene>
<dbReference type="EMBL" id="D50532">
    <property type="protein sequence ID" value="BAA09101.1"/>
    <property type="molecule type" value="mRNA"/>
</dbReference>
<dbReference type="EMBL" id="AK292363">
    <property type="protein sequence ID" value="BAF85052.1"/>
    <property type="molecule type" value="mRNA"/>
</dbReference>
<dbReference type="EMBL" id="BC027858">
    <property type="protein sequence ID" value="AAH27858.1"/>
    <property type="molecule type" value="mRNA"/>
</dbReference>
<dbReference type="EMBL" id="BC039011">
    <property type="protein sequence ID" value="AAH39011.1"/>
    <property type="molecule type" value="mRNA"/>
</dbReference>
<dbReference type="CCDS" id="CCDS11087.1">
    <molecule id="Q8IUN9-1"/>
</dbReference>
<dbReference type="CCDS" id="CCDS45597.1">
    <molecule id="Q8IUN9-2"/>
</dbReference>
<dbReference type="RefSeq" id="NP_006335.2">
    <molecule id="Q8IUN9-2"/>
    <property type="nucleotide sequence ID" value="NM_006344.4"/>
</dbReference>
<dbReference type="RefSeq" id="NP_878910.1">
    <molecule id="Q8IUN9-1"/>
    <property type="nucleotide sequence ID" value="NM_182906.4"/>
</dbReference>
<dbReference type="PDB" id="6PUV">
    <property type="method" value="X-ray"/>
    <property type="resolution" value="1.20 A"/>
    <property type="chains" value="A=181-308"/>
</dbReference>
<dbReference type="PDB" id="6PY1">
    <property type="method" value="X-ray"/>
    <property type="resolution" value="1.70 A"/>
    <property type="chains" value="A=181-309"/>
</dbReference>
<dbReference type="PDB" id="6W12">
    <property type="method" value="X-ray"/>
    <property type="resolution" value="2.00 A"/>
    <property type="chains" value="A=181-308"/>
</dbReference>
<dbReference type="PDB" id="6XIY">
    <property type="method" value="X-ray"/>
    <property type="resolution" value="2.31 A"/>
    <property type="chains" value="A=181-308"/>
</dbReference>
<dbReference type="PDBsum" id="6PUV"/>
<dbReference type="PDBsum" id="6PY1"/>
<dbReference type="PDBsum" id="6W12"/>
<dbReference type="PDBsum" id="6XIY"/>
<dbReference type="SMR" id="Q8IUN9"/>
<dbReference type="BioGRID" id="115725">
    <property type="interactions" value="31"/>
</dbReference>
<dbReference type="FunCoup" id="Q8IUN9">
    <property type="interactions" value="331"/>
</dbReference>
<dbReference type="IntAct" id="Q8IUN9">
    <property type="interactions" value="32"/>
</dbReference>
<dbReference type="MINT" id="Q8IUN9"/>
<dbReference type="STRING" id="9606.ENSP00000254868"/>
<dbReference type="UniLectin" id="Q8IUN9"/>
<dbReference type="GlyCosmos" id="Q8IUN9">
    <property type="glycosylation" value="2 sites, No reported glycans"/>
</dbReference>
<dbReference type="GlyGen" id="Q8IUN9">
    <property type="glycosylation" value="4 sites, 1 O-linked glycan (2 sites)"/>
</dbReference>
<dbReference type="iPTMnet" id="Q8IUN9"/>
<dbReference type="PhosphoSitePlus" id="Q8IUN9"/>
<dbReference type="BioMuta" id="CLEC10A"/>
<dbReference type="DMDM" id="59797948"/>
<dbReference type="MassIVE" id="Q8IUN9"/>
<dbReference type="PaxDb" id="9606-ENSP00000254868"/>
<dbReference type="PeptideAtlas" id="Q8IUN9"/>
<dbReference type="Antibodypedia" id="11754">
    <property type="antibodies" value="389 antibodies from 29 providers"/>
</dbReference>
<dbReference type="DNASU" id="10462"/>
<dbReference type="Ensembl" id="ENST00000254868.8">
    <molecule id="Q8IUN9-1"/>
    <property type="protein sequence ID" value="ENSP00000254868.4"/>
    <property type="gene ID" value="ENSG00000132514.14"/>
</dbReference>
<dbReference type="Ensembl" id="ENST00000571664.1">
    <molecule id="Q8IUN9-2"/>
    <property type="protein sequence ID" value="ENSP00000460252.1"/>
    <property type="gene ID" value="ENSG00000132514.14"/>
</dbReference>
<dbReference type="Ensembl" id="ENST00000576617.5">
    <molecule id="Q8IUN9-3"/>
    <property type="protein sequence ID" value="ENSP00000458728.1"/>
    <property type="gene ID" value="ENSG00000132514.14"/>
</dbReference>
<dbReference type="GeneID" id="10462"/>
<dbReference type="KEGG" id="hsa:10462"/>
<dbReference type="UCSC" id="uc002gej.4">
    <molecule id="Q8IUN9-1"/>
    <property type="organism name" value="human"/>
</dbReference>
<dbReference type="AGR" id="HGNC:16916"/>
<dbReference type="CTD" id="10462"/>
<dbReference type="DisGeNET" id="10462"/>
<dbReference type="GeneCards" id="CLEC10A"/>
<dbReference type="HGNC" id="HGNC:16916">
    <property type="gene designation" value="CLEC10A"/>
</dbReference>
<dbReference type="HPA" id="ENSG00000132514">
    <property type="expression patterns" value="Tissue enhanced (lymphoid)"/>
</dbReference>
<dbReference type="MIM" id="605999">
    <property type="type" value="gene"/>
</dbReference>
<dbReference type="neXtProt" id="NX_Q8IUN9"/>
<dbReference type="OpenTargets" id="ENSG00000132514"/>
<dbReference type="PharmGKB" id="PA134975011"/>
<dbReference type="VEuPathDB" id="HostDB:ENSG00000132514"/>
<dbReference type="eggNOG" id="KOG4297">
    <property type="taxonomic scope" value="Eukaryota"/>
</dbReference>
<dbReference type="GeneTree" id="ENSGT00940000162036"/>
<dbReference type="HOGENOM" id="CLU_1093963_0_0_1"/>
<dbReference type="InParanoid" id="Q8IUN9"/>
<dbReference type="OrthoDB" id="2142683at2759"/>
<dbReference type="PAN-GO" id="Q8IUN9">
    <property type="GO annotations" value="3 GO annotations based on evolutionary models"/>
</dbReference>
<dbReference type="PhylomeDB" id="Q8IUN9"/>
<dbReference type="TreeFam" id="TF352155"/>
<dbReference type="PathwayCommons" id="Q8IUN9"/>
<dbReference type="Reactome" id="R-HSA-5621480">
    <property type="pathway name" value="Dectin-2 family"/>
</dbReference>
<dbReference type="SignaLink" id="Q8IUN9"/>
<dbReference type="BioGRID-ORCS" id="10462">
    <property type="hits" value="6 hits in 1156 CRISPR screens"/>
</dbReference>
<dbReference type="GeneWiki" id="CLEC10A"/>
<dbReference type="GenomeRNAi" id="10462"/>
<dbReference type="Pharos" id="Q8IUN9">
    <property type="development level" value="Tbio"/>
</dbReference>
<dbReference type="PRO" id="PR:Q8IUN9"/>
<dbReference type="Proteomes" id="UP000005640">
    <property type="component" value="Chromosome 17"/>
</dbReference>
<dbReference type="RNAct" id="Q8IUN9">
    <property type="molecule type" value="protein"/>
</dbReference>
<dbReference type="Bgee" id="ENSG00000132514">
    <property type="expression patterns" value="Expressed in oocyte and 139 other cell types or tissues"/>
</dbReference>
<dbReference type="ExpressionAtlas" id="Q8IUN9">
    <property type="expression patterns" value="baseline and differential"/>
</dbReference>
<dbReference type="GO" id="GO:0031901">
    <property type="term" value="C:early endosome membrane"/>
    <property type="evidence" value="ECO:0007669"/>
    <property type="project" value="UniProtKB-SubCell"/>
</dbReference>
<dbReference type="GO" id="GO:0009897">
    <property type="term" value="C:external side of plasma membrane"/>
    <property type="evidence" value="ECO:0000318"/>
    <property type="project" value="GO_Central"/>
</dbReference>
<dbReference type="GO" id="GO:0005765">
    <property type="term" value="C:lysosomal membrane"/>
    <property type="evidence" value="ECO:0007669"/>
    <property type="project" value="UniProtKB-SubCell"/>
</dbReference>
<dbReference type="GO" id="GO:0005886">
    <property type="term" value="C:plasma membrane"/>
    <property type="evidence" value="ECO:0000304"/>
    <property type="project" value="Reactome"/>
</dbReference>
<dbReference type="GO" id="GO:0030246">
    <property type="term" value="F:carbohydrate binding"/>
    <property type="evidence" value="ECO:0000304"/>
    <property type="project" value="ProtInc"/>
</dbReference>
<dbReference type="GO" id="GO:0005537">
    <property type="term" value="F:D-mannose binding"/>
    <property type="evidence" value="ECO:0000318"/>
    <property type="project" value="GO_Central"/>
</dbReference>
<dbReference type="GO" id="GO:0042806">
    <property type="term" value="F:fucose binding"/>
    <property type="evidence" value="ECO:0000318"/>
    <property type="project" value="GO_Central"/>
</dbReference>
<dbReference type="GO" id="GO:0038187">
    <property type="term" value="F:pattern recognition receptor activity"/>
    <property type="evidence" value="ECO:0000318"/>
    <property type="project" value="GO_Central"/>
</dbReference>
<dbReference type="GO" id="GO:0002250">
    <property type="term" value="P:adaptive immune response"/>
    <property type="evidence" value="ECO:0007669"/>
    <property type="project" value="UniProtKB-KW"/>
</dbReference>
<dbReference type="GO" id="GO:0006897">
    <property type="term" value="P:endocytosis"/>
    <property type="evidence" value="ECO:0007669"/>
    <property type="project" value="UniProtKB-KW"/>
</dbReference>
<dbReference type="GO" id="GO:0006955">
    <property type="term" value="P:immune response"/>
    <property type="evidence" value="ECO:0000318"/>
    <property type="project" value="GO_Central"/>
</dbReference>
<dbReference type="GO" id="GO:0045087">
    <property type="term" value="P:innate immune response"/>
    <property type="evidence" value="ECO:0007669"/>
    <property type="project" value="UniProtKB-KW"/>
</dbReference>
<dbReference type="CDD" id="cd03590">
    <property type="entry name" value="CLECT_DC-SIGN_like"/>
    <property type="match status" value="1"/>
</dbReference>
<dbReference type="FunFam" id="3.10.100.10:FF:000041">
    <property type="entry name" value="Asialoglycoprotein receptor 1"/>
    <property type="match status" value="1"/>
</dbReference>
<dbReference type="Gene3D" id="3.10.100.10">
    <property type="entry name" value="Mannose-Binding Protein A, subunit A"/>
    <property type="match status" value="1"/>
</dbReference>
<dbReference type="InterPro" id="IPR001304">
    <property type="entry name" value="C-type_lectin-like"/>
</dbReference>
<dbReference type="InterPro" id="IPR016186">
    <property type="entry name" value="C-type_lectin-like/link_sf"/>
</dbReference>
<dbReference type="InterPro" id="IPR050111">
    <property type="entry name" value="C-type_lectin/snaclec_domain"/>
</dbReference>
<dbReference type="InterPro" id="IPR018378">
    <property type="entry name" value="C-type_lectin_CS"/>
</dbReference>
<dbReference type="InterPro" id="IPR033989">
    <property type="entry name" value="CD209-like_CTLD"/>
</dbReference>
<dbReference type="InterPro" id="IPR016187">
    <property type="entry name" value="CTDL_fold"/>
</dbReference>
<dbReference type="PANTHER" id="PTHR22803">
    <property type="entry name" value="MANNOSE, PHOSPHOLIPASE, LECTIN RECEPTOR RELATED"/>
    <property type="match status" value="1"/>
</dbReference>
<dbReference type="Pfam" id="PF00059">
    <property type="entry name" value="Lectin_C"/>
    <property type="match status" value="1"/>
</dbReference>
<dbReference type="Pfam" id="PF03954">
    <property type="entry name" value="Lectin_N"/>
    <property type="match status" value="1"/>
</dbReference>
<dbReference type="SMART" id="SM00034">
    <property type="entry name" value="CLECT"/>
    <property type="match status" value="1"/>
</dbReference>
<dbReference type="SUPFAM" id="SSF56436">
    <property type="entry name" value="C-type lectin-like"/>
    <property type="match status" value="1"/>
</dbReference>
<dbReference type="PROSITE" id="PS00615">
    <property type="entry name" value="C_TYPE_LECTIN_1"/>
    <property type="match status" value="1"/>
</dbReference>
<dbReference type="PROSITE" id="PS50041">
    <property type="entry name" value="C_TYPE_LECTIN_2"/>
    <property type="match status" value="1"/>
</dbReference>
<sequence>MTRTYENFQYLENKVKVQGFKNGPLPLQSLLQRLCSGPCHLLLSLGLGLLLLVIICVVGFQNSKFQRDLVTLRTDFSNFTSNTVAEIQALTSQGSSLEETIASLKAEVEGFKQERQAGVSELQEHTTQKAHLGHCPHCPSVCVPVHSEMLLRVQQLVQDLKKLTCQVATLNNNASTEGTCCPVNWVEHQDSCYWFSHSGMSWAEAEKYCQLKNAHLVVINSREEQNFVQKYLGSAYTWMGLSDPEGAWKWVDGTDYATGFQNWKPGQPDDWQGHGLGGGEDCAHFHPDGRWNDDVCQRPYHWVCEAGLGQTSQESH</sequence>
<name>CLC10_HUMAN</name>
<reference key="1">
    <citation type="journal article" date="1996" name="J. Immunol.">
        <title>Molecular cloning and expression of cDNA encoding human macrophage c-type lectin: its unique carbohydrate binding specificity for Tn antigen.</title>
        <authorList>
            <person name="Suzuki N."/>
            <person name="Yamamoto K."/>
            <person name="Toyoshima S."/>
            <person name="Osawa T."/>
            <person name="Irimura T."/>
        </authorList>
    </citation>
    <scope>NUCLEOTIDE SEQUENCE [MRNA] (ISOFORM 2)</scope>
    <scope>FUNCTION</scope>
    <scope>VARIANT ARG-35</scope>
    <source>
        <tissue>Peripheral blood monocyte</tissue>
    </source>
</reference>
<reference key="2">
    <citation type="journal article" date="2004" name="Nat. Genet.">
        <title>Complete sequencing and characterization of 21,243 full-length human cDNAs.</title>
        <authorList>
            <person name="Ota T."/>
            <person name="Suzuki Y."/>
            <person name="Nishikawa T."/>
            <person name="Otsuki T."/>
            <person name="Sugiyama T."/>
            <person name="Irie R."/>
            <person name="Wakamatsu A."/>
            <person name="Hayashi K."/>
            <person name="Sato H."/>
            <person name="Nagai K."/>
            <person name="Kimura K."/>
            <person name="Makita H."/>
            <person name="Sekine M."/>
            <person name="Obayashi M."/>
            <person name="Nishi T."/>
            <person name="Shibahara T."/>
            <person name="Tanaka T."/>
            <person name="Ishii S."/>
            <person name="Yamamoto J."/>
            <person name="Saito K."/>
            <person name="Kawai Y."/>
            <person name="Isono Y."/>
            <person name="Nakamura Y."/>
            <person name="Nagahari K."/>
            <person name="Murakami K."/>
            <person name="Yasuda T."/>
            <person name="Iwayanagi T."/>
            <person name="Wagatsuma M."/>
            <person name="Shiratori A."/>
            <person name="Sudo H."/>
            <person name="Hosoiri T."/>
            <person name="Kaku Y."/>
            <person name="Kodaira H."/>
            <person name="Kondo H."/>
            <person name="Sugawara M."/>
            <person name="Takahashi M."/>
            <person name="Kanda K."/>
            <person name="Yokoi T."/>
            <person name="Furuya T."/>
            <person name="Kikkawa E."/>
            <person name="Omura Y."/>
            <person name="Abe K."/>
            <person name="Kamihara K."/>
            <person name="Katsuta N."/>
            <person name="Sato K."/>
            <person name="Tanikawa M."/>
            <person name="Yamazaki M."/>
            <person name="Ninomiya K."/>
            <person name="Ishibashi T."/>
            <person name="Yamashita H."/>
            <person name="Murakawa K."/>
            <person name="Fujimori K."/>
            <person name="Tanai H."/>
            <person name="Kimata M."/>
            <person name="Watanabe M."/>
            <person name="Hiraoka S."/>
            <person name="Chiba Y."/>
            <person name="Ishida S."/>
            <person name="Ono Y."/>
            <person name="Takiguchi S."/>
            <person name="Watanabe S."/>
            <person name="Yosida M."/>
            <person name="Hotuta T."/>
            <person name="Kusano J."/>
            <person name="Kanehori K."/>
            <person name="Takahashi-Fujii A."/>
            <person name="Hara H."/>
            <person name="Tanase T.-O."/>
            <person name="Nomura Y."/>
            <person name="Togiya S."/>
            <person name="Komai F."/>
            <person name="Hara R."/>
            <person name="Takeuchi K."/>
            <person name="Arita M."/>
            <person name="Imose N."/>
            <person name="Musashino K."/>
            <person name="Yuuki H."/>
            <person name="Oshima A."/>
            <person name="Sasaki N."/>
            <person name="Aotsuka S."/>
            <person name="Yoshikawa Y."/>
            <person name="Matsunawa H."/>
            <person name="Ichihara T."/>
            <person name="Shiohata N."/>
            <person name="Sano S."/>
            <person name="Moriya S."/>
            <person name="Momiyama H."/>
            <person name="Satoh N."/>
            <person name="Takami S."/>
            <person name="Terashima Y."/>
            <person name="Suzuki O."/>
            <person name="Nakagawa S."/>
            <person name="Senoh A."/>
            <person name="Mizoguchi H."/>
            <person name="Goto Y."/>
            <person name="Shimizu F."/>
            <person name="Wakebe H."/>
            <person name="Hishigaki H."/>
            <person name="Watanabe T."/>
            <person name="Sugiyama A."/>
            <person name="Takemoto M."/>
            <person name="Kawakami B."/>
            <person name="Yamazaki M."/>
            <person name="Watanabe K."/>
            <person name="Kumagai A."/>
            <person name="Itakura S."/>
            <person name="Fukuzumi Y."/>
            <person name="Fujimori Y."/>
            <person name="Komiyama M."/>
            <person name="Tashiro H."/>
            <person name="Tanigami A."/>
            <person name="Fujiwara T."/>
            <person name="Ono T."/>
            <person name="Yamada K."/>
            <person name="Fujii Y."/>
            <person name="Ozaki K."/>
            <person name="Hirao M."/>
            <person name="Ohmori Y."/>
            <person name="Kawabata A."/>
            <person name="Hikiji T."/>
            <person name="Kobatake N."/>
            <person name="Inagaki H."/>
            <person name="Ikema Y."/>
            <person name="Okamoto S."/>
            <person name="Okitani R."/>
            <person name="Kawakami T."/>
            <person name="Noguchi S."/>
            <person name="Itoh T."/>
            <person name="Shigeta K."/>
            <person name="Senba T."/>
            <person name="Matsumura K."/>
            <person name="Nakajima Y."/>
            <person name="Mizuno T."/>
            <person name="Morinaga M."/>
            <person name="Sasaki M."/>
            <person name="Togashi T."/>
            <person name="Oyama M."/>
            <person name="Hata H."/>
            <person name="Watanabe M."/>
            <person name="Komatsu T."/>
            <person name="Mizushima-Sugano J."/>
            <person name="Satoh T."/>
            <person name="Shirai Y."/>
            <person name="Takahashi Y."/>
            <person name="Nakagawa K."/>
            <person name="Okumura K."/>
            <person name="Nagase T."/>
            <person name="Nomura N."/>
            <person name="Kikuchi H."/>
            <person name="Masuho Y."/>
            <person name="Yamashita R."/>
            <person name="Nakai K."/>
            <person name="Yada T."/>
            <person name="Nakamura Y."/>
            <person name="Ohara O."/>
            <person name="Isogai T."/>
            <person name="Sugano S."/>
        </authorList>
    </citation>
    <scope>NUCLEOTIDE SEQUENCE [LARGE SCALE MRNA] (ISOFORM 3)</scope>
    <source>
        <tissue>Testis</tissue>
    </source>
</reference>
<reference key="3">
    <citation type="journal article" date="2004" name="Genome Res.">
        <title>The status, quality, and expansion of the NIH full-length cDNA project: the Mammalian Gene Collection (MGC).</title>
        <authorList>
            <consortium name="The MGC Project Team"/>
        </authorList>
    </citation>
    <scope>NUCLEOTIDE SEQUENCE [LARGE SCALE MRNA] (ISOFORMS 1 AND 3)</scope>
    <source>
        <tissue>Brain</tissue>
    </source>
</reference>
<reference key="4">
    <citation type="journal article" date="2005" name="Int. Immunol.">
        <title>Carbohydrate profiling reveals a distinctive role for the C-type lectin MGL in the recognition of helminth parasites and tumor antigens by dendritic cells.</title>
        <authorList>
            <person name="van Vliet S.J."/>
            <person name="van Liempt E."/>
            <person name="Saeland E."/>
            <person name="Aarnoudse C.A."/>
            <person name="Appelmelk B."/>
            <person name="Irimura T."/>
            <person name="Geijtenbeek T.B."/>
            <person name="Blixt O."/>
            <person name="Alvarez R."/>
            <person name="van Die I."/>
            <person name="van Kooyk Y."/>
        </authorList>
    </citation>
    <scope>FUNCTION</scope>
</reference>
<reference key="5">
    <citation type="journal article" date="2006" name="Nat. Immunol.">
        <title>Regulation of effector T cells by antigen-presenting cells via interaction of the C-type lectin MGL with CD45.</title>
        <authorList>
            <person name="van Vliet S.J."/>
            <person name="Gringhuis S.I."/>
            <person name="Geijtenbeek T.B."/>
            <person name="van Kooyk Y."/>
        </authorList>
    </citation>
    <scope>FUNCTION</scope>
    <scope>SUBCELLULAR LOCATION</scope>
    <scope>TISSUE SPECIFICITY</scope>
    <scope>INTERACTION WITH CD45</scope>
</reference>
<reference key="6">
    <citation type="journal article" date="2007" name="Cancer Res.">
        <title>Tumor-associated Tn-MUC1 glycoform is internalized through the macrophage galactose-type C-type lectin and delivered to the HLA class I and II compartments in dendritic cells.</title>
        <authorList>
            <person name="Napoletano C."/>
            <person name="Rughetti A."/>
            <person name="Agervig Tarp M.P."/>
            <person name="Coleman J."/>
            <person name="Bennett E.P."/>
            <person name="Picco G."/>
            <person name="Sale P."/>
            <person name="Denda-Nagai K."/>
            <person name="Irimura T."/>
            <person name="Mandel U."/>
            <person name="Clausen H."/>
            <person name="Frati L."/>
            <person name="Taylor-Papadimitriou J."/>
            <person name="Burchell J."/>
            <person name="Nuti M."/>
        </authorList>
    </citation>
    <scope>FUNCTION</scope>
    <scope>SUBCELLULAR LOCATION</scope>
</reference>
<reference key="7">
    <citation type="journal article" date="2007" name="Eur. J. Immunol.">
        <title>MGL-mediated internalization and antigen presentation by dendritic cells: a role for tyrosine-5.</title>
        <authorList>
            <person name="van Vliet S.J."/>
            <person name="Aarnoudse C.A."/>
            <person name="Broks-van den Berg V.C."/>
            <person name="Boks M."/>
            <person name="Geijtenbeek T.B."/>
            <person name="van Kooyk Y."/>
        </authorList>
    </citation>
    <scope>FUNCTION</scope>
    <scope>MOTIF</scope>
    <scope>SUBCELLULAR LOCATION</scope>
    <scope>MUTAGENESIS OF TYR-5; LEU-30 AND LEU-31</scope>
</reference>
<reference key="8">
    <citation type="journal article" date="2012" name="J. Exp. Med.">
        <title>Targeting self- and foreign antigens to dendritic cells via DC-ASGPR generates IL-10-producing suppressive CD4+ T cells.</title>
        <authorList>
            <person name="Li D."/>
            <person name="Romain G."/>
            <person name="Flamar A.L."/>
            <person name="Duluc D."/>
            <person name="Dullaers M."/>
            <person name="Li X.H."/>
            <person name="Zurawski S."/>
            <person name="Bosquet N."/>
            <person name="Palucka A.K."/>
            <person name="Le Grand R."/>
            <person name="O'Garra A."/>
            <person name="Zurawski G."/>
            <person name="Banchereau J."/>
            <person name="Oh S."/>
        </authorList>
    </citation>
    <scope>FUNCTION</scope>
    <scope>TISSUE SPECIFICITY</scope>
</reference>
<reference key="9">
    <citation type="journal article" date="2013" name="Glycobiology">
        <title>Tumor-associated Neu5Ac-Tn and Neu5Gc-Tn antigens bind to C-type lectin CLEC10A (CD301, MGL).</title>
        <authorList>
            <person name="Mortezai N."/>
            <person name="Behnken H.N."/>
            <person name="Kurze A.K."/>
            <person name="Ludewig P."/>
            <person name="Buck F."/>
            <person name="Meyer B."/>
            <person name="Wagener C."/>
        </authorList>
    </citation>
    <scope>FUNCTION</scope>
</reference>
<reference key="10">
    <citation type="journal article" date="2021" name="Biochemistry">
        <title>Crystal Structure of the Carbohydrate Recognition Domain of the Human Macrophage Galactose C-Type Lectin Bound to GalNAc and the Tumor-Associated Tn Antigen.</title>
        <authorList>
            <person name="Gabba A."/>
            <person name="Bogucka A."/>
            <person name="Luz J.G."/>
            <person name="Diniz A."/>
            <person name="Coelho H."/>
            <person name="Corzana F."/>
            <person name="Canada F.J."/>
            <person name="Marcelo F."/>
            <person name="Murphy P.V."/>
            <person name="Birrane G."/>
        </authorList>
    </citation>
    <scope>X-RAY CRYSTALLOGRAPHY (1.20 ANGSTROMS) OF 181-308 IN COMPLEX WITH CA(2+); N-ACETYL-ALPHA-D-GALACTOSAMINE AND TN-SER ANTIGEN</scope>
    <scope>FUNCTION</scope>
</reference>
<comment type="function">
    <text evidence="3 4 5 6 7 8 9 10">C-type lectin receptor involved in recognition of N-acetylgalactosamine (GalNAc)-terminated glycans by myeloid antigen presenting cells (APCs) (PubMed:15802303, PubMed:16998493, PubMed:17616966, PubMed:22213806, PubMed:33724805, PubMed:8598452). Binds in a Ca(2+)-dependent manner to alpha- and beta-linked GalNAc residues on glycoprotein and glycolipid antigens, including alphaGalNAc- and Galbeta1-&gt;3GalNAc-O-Ser/Thr also known as Tn and T antigens, LacdiNAc epitope GalNAcbeta1-&gt;4GlcNAc and its derivative GalNAcbeta1-&gt;4-(Fucalpha1-&gt;3)GlcNAc, O-linked core 5 and 6 glycans, and GM2 and GD2 gangliosides (PubMed:15802303, PubMed:23507963). Acts as a signaling receptor at the interface of APC-T cell interactions. On immature dendritic cells, recognizes Tn antigen-carrying PTPRC/CD45 receptor on effector T cells and downregulates PTRPN/CD45 phosphatase activity with an impact on T cell activation threshold, cytokine production and proliferation. Modulates dendritic cell maturation toward a tolerogenic phenotype leading to generation of regulatory CD4-positive T cell subset with immune suppressive functions (PubMed:15802303, PubMed:16998493, PubMed:22213806). Acts as an endocytic pattern recognition receptor involved in antitumor immunity. During tumorigenesis, recognizes Tn antigens and its sialylated forms Neu5Ac-Tn and Neu5Gc-Tn expressed on tumor cell mucins. On immature dendritic cells, can internalize Tn-terminated immunogens and target them to endolysosomal compartment for MHC class I and II antigen presentation to CD8-positive and CD4-positive T cells, respectively (PubMed:15802303, PubMed:17616966, PubMed:17804752).</text>
</comment>
<comment type="subunit">
    <text evidence="4">Interacts with A-, B- and C-domain containing PTPRC/CD45 isoforms: isoform 1/CD45ABC, isoform 3/CD45AB, isoform 5/CD45BC and isoform 7/CD45B. Does not interact with PTPRC/CD45 isoform 2/CD45RO, a memory T cell marker.</text>
</comment>
<comment type="interaction">
    <interactant intactId="EBI-2873246">
        <id>Q8IUN9</id>
    </interactant>
    <interactant intactId="EBI-2876502">
        <id>Q96CM8</id>
        <label>ACSF2</label>
    </interactant>
    <organismsDiffer>false</organismsDiffer>
    <experiments>3</experiments>
</comment>
<comment type="interaction">
    <interactant intactId="EBI-2873246">
        <id>Q8IUN9</id>
    </interactant>
    <interactant intactId="EBI-10827839">
        <id>Q15848</id>
        <label>ADIPOQ</label>
    </interactant>
    <organismsDiffer>false</organismsDiffer>
    <experiments>3</experiments>
</comment>
<comment type="interaction">
    <interactant intactId="EBI-2873246">
        <id>Q8IUN9</id>
    </interactant>
    <interactant intactId="EBI-715495">
        <id>P05090</id>
        <label>APOD</label>
    </interactant>
    <organismsDiffer>false</organismsDiffer>
    <experiments>3</experiments>
</comment>
<comment type="interaction">
    <interactant intactId="EBI-2873246">
        <id>Q8IUN9</id>
    </interactant>
    <interactant intactId="EBI-749204">
        <id>O15155</id>
        <label>BET1</label>
    </interactant>
    <organismsDiffer>false</organismsDiffer>
    <experiments>3</experiments>
</comment>
<comment type="interaction">
    <interactant intactId="EBI-2873246">
        <id>Q8IUN9</id>
    </interactant>
    <interactant intactId="EBI-6165897">
        <id>Q9NWW5</id>
        <label>CLN6</label>
    </interactant>
    <organismsDiffer>false</organismsDiffer>
    <experiments>3</experiments>
</comment>
<comment type="interaction">
    <interactant intactId="EBI-2873246">
        <id>Q8IUN9</id>
    </interactant>
    <interactant intactId="EBI-14063291">
        <id>Q8N8J7</id>
        <label>FAM241A</label>
    </interactant>
    <organismsDiffer>false</organismsDiffer>
    <experiments>2</experiments>
</comment>
<comment type="interaction">
    <interactant intactId="EBI-2873246">
        <id>Q8IUN9</id>
    </interactant>
    <interactant intactId="EBI-12361463">
        <id>P31513</id>
        <label>FMO3</label>
    </interactant>
    <organismsDiffer>false</organismsDiffer>
    <experiments>3</experiments>
</comment>
<comment type="interaction">
    <interactant intactId="EBI-2873246">
        <id>Q8IUN9</id>
    </interactant>
    <interactant intactId="EBI-713304">
        <id>Q9H0Q3</id>
        <label>FXYD6</label>
    </interactant>
    <organismsDiffer>false</organismsDiffer>
    <experiments>3</experiments>
</comment>
<comment type="interaction">
    <interactant intactId="EBI-2873246">
        <id>Q8IUN9</id>
    </interactant>
    <interactant intactId="EBI-11991950">
        <id>Q8WWP7</id>
        <label>GIMAP1</label>
    </interactant>
    <organismsDiffer>false</organismsDiffer>
    <experiments>4</experiments>
</comment>
<comment type="interaction">
    <interactant intactId="EBI-2873246">
        <id>Q8IUN9</id>
    </interactant>
    <interactant intactId="EBI-750078">
        <id>Q13021</id>
        <label>MALL</label>
    </interactant>
    <organismsDiffer>false</organismsDiffer>
    <experiments>3</experiments>
</comment>
<comment type="interaction">
    <interactant intactId="EBI-2873246">
        <id>Q8IUN9</id>
    </interactant>
    <interactant intactId="EBI-3921185">
        <id>Q9H115</id>
        <label>NAPB</label>
    </interactant>
    <organismsDiffer>false</organismsDiffer>
    <experiments>5</experiments>
</comment>
<comment type="interaction">
    <interactant intactId="EBI-2873246">
        <id>Q8IUN9</id>
    </interactant>
    <interactant intactId="EBI-981985">
        <id>Q9Y5Y5</id>
        <label>PEX16</label>
    </interactant>
    <organismsDiffer>false</organismsDiffer>
    <experiments>3</experiments>
</comment>
<comment type="interaction">
    <interactant intactId="EBI-2873246">
        <id>Q8IUN9</id>
    </interactant>
    <interactant intactId="EBI-2506064">
        <id>O60831</id>
        <label>PRAF2</label>
    </interactant>
    <organismsDiffer>false</organismsDiffer>
    <experiments>3</experiments>
</comment>
<comment type="interaction">
    <interactant intactId="EBI-2873246">
        <id>Q8IUN9</id>
    </interactant>
    <interactant intactId="EBI-8652744">
        <id>Q96IW7</id>
        <label>SEC22A</label>
    </interactant>
    <organismsDiffer>false</organismsDiffer>
    <experiments>3</experiments>
</comment>
<comment type="interaction">
    <interactant intactId="EBI-2873246">
        <id>Q8IUN9</id>
    </interactant>
    <interactant intactId="EBI-10314552">
        <id>Q9NVC3</id>
        <label>SLC38A7</label>
    </interactant>
    <organismsDiffer>false</organismsDiffer>
    <experiments>3</experiments>
</comment>
<comment type="interaction">
    <interactant intactId="EBI-2873246">
        <id>Q8IUN9</id>
    </interactant>
    <interactant intactId="EBI-8640191">
        <id>Q9NRQ5</id>
        <label>SMCO4</label>
    </interactant>
    <organismsDiffer>false</organismsDiffer>
    <experiments>3</experiments>
</comment>
<comment type="interaction">
    <interactant intactId="EBI-2873246">
        <id>Q8IUN9</id>
    </interactant>
    <interactant intactId="EBI-10173151">
        <id>A2RU14</id>
        <label>TMEM218</label>
    </interactant>
    <organismsDiffer>false</organismsDiffer>
    <experiments>3</experiments>
</comment>
<comment type="interaction">
    <interactant intactId="EBI-2873246">
        <id>Q8IUN9</id>
    </interactant>
    <interactant intactId="EBI-359977">
        <id>P01375</id>
        <label>TNF</label>
    </interactant>
    <organismsDiffer>false</organismsDiffer>
    <experiments>3</experiments>
</comment>
<comment type="interaction">
    <interactant intactId="EBI-2873246">
        <id>Q8IUN9</id>
    </interactant>
    <interactant intactId="EBI-6623146">
        <id>P30536</id>
        <label>TSPO</label>
    </interactant>
    <organismsDiffer>false</organismsDiffer>
    <experiments>3</experiments>
</comment>
<comment type="interaction">
    <interactant intactId="EBI-2873246">
        <id>Q8IUN9</id>
    </interactant>
    <interactant intactId="EBI-10243654">
        <id>Q5BVD1</id>
        <label>TTMP</label>
    </interactant>
    <organismsDiffer>false</organismsDiffer>
    <experiments>3</experiments>
</comment>
<comment type="interaction">
    <interactant intactId="EBI-2873246">
        <id>Q8IUN9</id>
    </interactant>
    <interactant intactId="EBI-11988865">
        <id>A5PKU2</id>
        <label>TUSC5</label>
    </interactant>
    <organismsDiffer>false</organismsDiffer>
    <experiments>3</experiments>
</comment>
<comment type="interaction">
    <interactant intactId="EBI-2873246">
        <id>Q8IUN9</id>
    </interactant>
    <interactant intactId="EBI-7601760">
        <id>Q53HI1</id>
        <label>UNC50</label>
    </interactant>
    <organismsDiffer>false</organismsDiffer>
    <experiments>3</experiments>
</comment>
<comment type="interaction">
    <interactant intactId="EBI-2873246">
        <id>Q8IUN9</id>
    </interactant>
    <interactant intactId="EBI-12190699">
        <id>Q6UX27-3</id>
        <label>VSTM1</label>
    </interactant>
    <organismsDiffer>false</organismsDiffer>
    <experiments>3</experiments>
</comment>
<comment type="interaction">
    <interactant intactId="EBI-2873246">
        <id>Q8IUN9</id>
    </interactant>
    <interactant intactId="EBI-12837904">
        <id>Q96MV8</id>
        <label>ZDHHC15</label>
    </interactant>
    <organismsDiffer>false</organismsDiffer>
    <experiments>3</experiments>
</comment>
<comment type="interaction">
    <interactant intactId="EBI-2873246">
        <id>Q8IUN9</id>
    </interactant>
    <interactant intactId="EBI-718439">
        <id>O95159</id>
        <label>ZFPL1</label>
    </interactant>
    <organismsDiffer>false</organismsDiffer>
    <experiments>3</experiments>
</comment>
<comment type="interaction">
    <interactant intactId="EBI-2873246">
        <id>Q8IUN9</id>
    </interactant>
    <interactant intactId="EBI-25474821">
        <id>P0DTC2</id>
        <label>S</label>
    </interactant>
    <organismsDiffer>true</organismsDiffer>
    <experiments>3</experiments>
</comment>
<comment type="interaction">
    <interactant intactId="EBI-25776912">
        <id>Q8IUN9-2</id>
    </interactant>
    <interactant intactId="EBI-25474821">
        <id>P0DTC2</id>
        <label>S</label>
    </interactant>
    <organismsDiffer>true</organismsDiffer>
    <experiments>4</experiments>
</comment>
<comment type="subcellular location">
    <subcellularLocation>
        <location evidence="4 5 6">Cell membrane</location>
        <topology>Single-pass type II membrane protein</topology>
    </subcellularLocation>
    <subcellularLocation>
        <location evidence="5">Early endosome membrane</location>
        <topology>Single-pass type II membrane protein</topology>
    </subcellularLocation>
    <subcellularLocation>
        <location evidence="5">Lysosome membrane</location>
        <topology>Single-pass type II membrane protein</topology>
    </subcellularLocation>
    <text evidence="5">Recycles between the plasma membrane and the endolysosomal compartment. Upon antigen binding, internalizes via endocytosis and then dissociates from antigen at acidic pH characteristic of endolysosomal vesicles.</text>
</comment>
<comment type="alternative products">
    <event type="alternative splicing"/>
    <isoform>
        <id>Q8IUN9-1</id>
        <name>1</name>
        <sequence type="displayed"/>
    </isoform>
    <isoform>
        <id>Q8IUN9-2</id>
        <name>2</name>
        <sequence type="described" ref="VSP_012848 VSP_012849"/>
    </isoform>
    <isoform>
        <id>Q8IUN9-3</id>
        <name>3</name>
        <sequence type="described" ref="VSP_012848 VSP_012850 VSP_012851"/>
    </isoform>
</comment>
<comment type="tissue specificity">
    <text evidence="4 7">Expressed in myeloid antigen presenting cells in lymph nodes and skin (at protein level). Expressed in dermal dendritic cells (at protein level).</text>
</comment>
<comment type="online information" name="Functional Glycomics Gateway - Glycan Binding">
    <link uri="http://www.functionalglycomics.org/glycomics/GBPServlet?&amp;operationType=view&amp;cbpId=cbp_hum_Ctlect_217"/>
    <text>MGL</text>
</comment>
<proteinExistence type="evidence at protein level"/>
<protein>
    <recommendedName>
        <fullName>C-type lectin domain family 10 member A</fullName>
    </recommendedName>
    <alternativeName>
        <fullName>C-type lectin superfamily member 14</fullName>
    </alternativeName>
    <alternativeName>
        <fullName evidence="14">DC-asialoglycoprotein receptor</fullName>
        <shortName evidence="14">DC-ASGPR</shortName>
    </alternativeName>
    <alternativeName>
        <fullName evidence="13">Macrophage galactose-type lectin</fullName>
        <shortName evidence="13">MGL</shortName>
    </alternativeName>
    <alternativeName>
        <fullName>Macrophage lectin 2</fullName>
    </alternativeName>
    <cdAntigenName evidence="15">CD301</cdAntigenName>
</protein>
<accession>Q8IUN9</accession>
<accession>A8K8J8</accession>
<accession>Q14538</accession>
<accession>Q6PIW3</accession>
<organism>
    <name type="scientific">Homo sapiens</name>
    <name type="common">Human</name>
    <dbReference type="NCBI Taxonomy" id="9606"/>
    <lineage>
        <taxon>Eukaryota</taxon>
        <taxon>Metazoa</taxon>
        <taxon>Chordata</taxon>
        <taxon>Craniata</taxon>
        <taxon>Vertebrata</taxon>
        <taxon>Euteleostomi</taxon>
        <taxon>Mammalia</taxon>
        <taxon>Eutheria</taxon>
        <taxon>Euarchontoglires</taxon>
        <taxon>Primates</taxon>
        <taxon>Haplorrhini</taxon>
        <taxon>Catarrhini</taxon>
        <taxon>Hominidae</taxon>
        <taxon>Homo</taxon>
    </lineage>
</organism>
<keyword id="KW-0002">3D-structure</keyword>
<keyword id="KW-1064">Adaptive immunity</keyword>
<keyword id="KW-0025">Alternative splicing</keyword>
<keyword id="KW-1003">Cell membrane</keyword>
<keyword id="KW-0175">Coiled coil</keyword>
<keyword id="KW-1015">Disulfide bond</keyword>
<keyword id="KW-0254">Endocytosis</keyword>
<keyword id="KW-0967">Endosome</keyword>
<keyword id="KW-0325">Glycoprotein</keyword>
<keyword id="KW-0391">Immunity</keyword>
<keyword id="KW-0399">Innate immunity</keyword>
<keyword id="KW-0430">Lectin</keyword>
<keyword id="KW-0458">Lysosome</keyword>
<keyword id="KW-0472">Membrane</keyword>
<keyword id="KW-1267">Proteomics identification</keyword>
<keyword id="KW-1185">Reference proteome</keyword>
<keyword id="KW-0735">Signal-anchor</keyword>
<keyword id="KW-0812">Transmembrane</keyword>
<keyword id="KW-1133">Transmembrane helix</keyword>